<accession>A0KJH4</accession>
<sequence length="293" mass="31202">MHPRFAKPLDTLSAPLKAALLPMLGDDFQARFTPDQVATLKAATGLDDRALRLALLPLAAACSVAPISKFFVGAIACGLSGNWYFGANMEFAGQGLFHSVHAEQSAISNAWLGGETGISEITVNYTPCGHCRQFMNELSTAKILKVSLPDDLSALQSFLPHSFGPADLDITDALMSPQAHDELTLVSDDPLWQAALAAARQSYAPYSQGYAAVALQFADGRIFCGRYAENAAFNPSLPPMQMACAHAVLGGEDLATIRRAVLLESKDGQISQQDSARATLKALGSVELEYQAV</sequence>
<organism>
    <name type="scientific">Aeromonas hydrophila subsp. hydrophila (strain ATCC 7966 / DSM 30187 / BCRC 13018 / CCUG 14551 / JCM 1027 / KCTC 2358 / NCIMB 9240 / NCTC 8049)</name>
    <dbReference type="NCBI Taxonomy" id="380703"/>
    <lineage>
        <taxon>Bacteria</taxon>
        <taxon>Pseudomonadati</taxon>
        <taxon>Pseudomonadota</taxon>
        <taxon>Gammaproteobacteria</taxon>
        <taxon>Aeromonadales</taxon>
        <taxon>Aeromonadaceae</taxon>
        <taxon>Aeromonas</taxon>
    </lineage>
</organism>
<protein>
    <recommendedName>
        <fullName evidence="1">Cytidine deaminase</fullName>
        <ecNumber evidence="1">3.5.4.5</ecNumber>
    </recommendedName>
    <alternativeName>
        <fullName evidence="1">Cytidine aminohydrolase</fullName>
        <shortName evidence="1">CDA</shortName>
    </alternativeName>
</protein>
<name>CDD_AERHH</name>
<proteinExistence type="inferred from homology"/>
<feature type="chain" id="PRO_1000068945" description="Cytidine deaminase">
    <location>
        <begin position="1"/>
        <end position="293"/>
    </location>
</feature>
<feature type="domain" description="CMP/dCMP-type deaminase 1" evidence="2">
    <location>
        <begin position="47"/>
        <end position="166"/>
    </location>
</feature>
<feature type="domain" description="CMP/dCMP-type deaminase 2" evidence="2">
    <location>
        <begin position="186"/>
        <end position="293"/>
    </location>
</feature>
<feature type="active site" description="Proton donor" evidence="1">
    <location>
        <position position="103"/>
    </location>
</feature>
<feature type="binding site" evidence="1">
    <location>
        <begin position="88"/>
        <end position="90"/>
    </location>
    <ligand>
        <name>substrate</name>
    </ligand>
</feature>
<feature type="binding site" evidence="1">
    <location>
        <position position="101"/>
    </location>
    <ligand>
        <name>Zn(2+)</name>
        <dbReference type="ChEBI" id="CHEBI:29105"/>
        <note>catalytic</note>
    </ligand>
</feature>
<feature type="binding site" evidence="1">
    <location>
        <position position="128"/>
    </location>
    <ligand>
        <name>Zn(2+)</name>
        <dbReference type="ChEBI" id="CHEBI:29105"/>
        <note>catalytic</note>
    </ligand>
</feature>
<feature type="binding site" evidence="1">
    <location>
        <position position="131"/>
    </location>
    <ligand>
        <name>Zn(2+)</name>
        <dbReference type="ChEBI" id="CHEBI:29105"/>
        <note>catalytic</note>
    </ligand>
</feature>
<keyword id="KW-0378">Hydrolase</keyword>
<keyword id="KW-0479">Metal-binding</keyword>
<keyword id="KW-1185">Reference proteome</keyword>
<keyword id="KW-0862">Zinc</keyword>
<dbReference type="EC" id="3.5.4.5" evidence="1"/>
<dbReference type="EMBL" id="CP000462">
    <property type="protein sequence ID" value="ABK36838.1"/>
    <property type="molecule type" value="Genomic_DNA"/>
</dbReference>
<dbReference type="RefSeq" id="WP_011705769.1">
    <property type="nucleotide sequence ID" value="NC_008570.1"/>
</dbReference>
<dbReference type="RefSeq" id="YP_856425.1">
    <property type="nucleotide sequence ID" value="NC_008570.1"/>
</dbReference>
<dbReference type="SMR" id="A0KJH4"/>
<dbReference type="STRING" id="380703.AHA_1894"/>
<dbReference type="EnsemblBacteria" id="ABK36838">
    <property type="protein sequence ID" value="ABK36838"/>
    <property type="gene ID" value="AHA_1894"/>
</dbReference>
<dbReference type="GeneID" id="4488666"/>
<dbReference type="KEGG" id="aha:AHA_1894"/>
<dbReference type="PATRIC" id="fig|380703.7.peg.1906"/>
<dbReference type="eggNOG" id="COG0295">
    <property type="taxonomic scope" value="Bacteria"/>
</dbReference>
<dbReference type="HOGENOM" id="CLU_052424_0_0_6"/>
<dbReference type="OrthoDB" id="9795347at2"/>
<dbReference type="Proteomes" id="UP000000756">
    <property type="component" value="Chromosome"/>
</dbReference>
<dbReference type="GO" id="GO:0005829">
    <property type="term" value="C:cytosol"/>
    <property type="evidence" value="ECO:0007669"/>
    <property type="project" value="TreeGrafter"/>
</dbReference>
<dbReference type="GO" id="GO:0004126">
    <property type="term" value="F:cytidine deaminase activity"/>
    <property type="evidence" value="ECO:0007669"/>
    <property type="project" value="UniProtKB-UniRule"/>
</dbReference>
<dbReference type="GO" id="GO:0042802">
    <property type="term" value="F:identical protein binding"/>
    <property type="evidence" value="ECO:0007669"/>
    <property type="project" value="UniProtKB-ARBA"/>
</dbReference>
<dbReference type="GO" id="GO:0008270">
    <property type="term" value="F:zinc ion binding"/>
    <property type="evidence" value="ECO:0007669"/>
    <property type="project" value="UniProtKB-UniRule"/>
</dbReference>
<dbReference type="GO" id="GO:0009972">
    <property type="term" value="P:cytidine deamination"/>
    <property type="evidence" value="ECO:0007669"/>
    <property type="project" value="InterPro"/>
</dbReference>
<dbReference type="CDD" id="cd01283">
    <property type="entry name" value="cytidine_deaminase"/>
    <property type="match status" value="2"/>
</dbReference>
<dbReference type="FunFam" id="3.40.140.10:FF:000007">
    <property type="entry name" value="Cytidine deaminase"/>
    <property type="match status" value="1"/>
</dbReference>
<dbReference type="Gene3D" id="3.40.140.10">
    <property type="entry name" value="Cytidine Deaminase, domain 2"/>
    <property type="match status" value="2"/>
</dbReference>
<dbReference type="HAMAP" id="MF_01558">
    <property type="entry name" value="Cyt_deam"/>
    <property type="match status" value="1"/>
</dbReference>
<dbReference type="InterPro" id="IPR016192">
    <property type="entry name" value="APOBEC/CMP_deaminase_Zn-bd"/>
</dbReference>
<dbReference type="InterPro" id="IPR002125">
    <property type="entry name" value="CMP_dCMP_dom"/>
</dbReference>
<dbReference type="InterPro" id="IPR013171">
    <property type="entry name" value="Cyd/dCyd_deaminase_Zn-bd"/>
</dbReference>
<dbReference type="InterPro" id="IPR050202">
    <property type="entry name" value="Cyt/Deoxycyt_deaminase"/>
</dbReference>
<dbReference type="InterPro" id="IPR006263">
    <property type="entry name" value="Cyt_deam_dimer"/>
</dbReference>
<dbReference type="InterPro" id="IPR016193">
    <property type="entry name" value="Cytidine_deaminase-like"/>
</dbReference>
<dbReference type="InterPro" id="IPR020797">
    <property type="entry name" value="Cytidine_deaminase_bacteria"/>
</dbReference>
<dbReference type="NCBIfam" id="TIGR01355">
    <property type="entry name" value="cyt_deam_dimer"/>
    <property type="match status" value="1"/>
</dbReference>
<dbReference type="NCBIfam" id="NF006537">
    <property type="entry name" value="PRK09027.1"/>
    <property type="match status" value="1"/>
</dbReference>
<dbReference type="PANTHER" id="PTHR11644">
    <property type="entry name" value="CYTIDINE DEAMINASE"/>
    <property type="match status" value="1"/>
</dbReference>
<dbReference type="PANTHER" id="PTHR11644:SF2">
    <property type="entry name" value="CYTIDINE DEAMINASE"/>
    <property type="match status" value="1"/>
</dbReference>
<dbReference type="Pfam" id="PF00383">
    <property type="entry name" value="dCMP_cyt_deam_1"/>
    <property type="match status" value="1"/>
</dbReference>
<dbReference type="Pfam" id="PF08211">
    <property type="entry name" value="dCMP_cyt_deam_2"/>
    <property type="match status" value="1"/>
</dbReference>
<dbReference type="PIRSF" id="PIRSF006334">
    <property type="entry name" value="Cdd_plus_pseudo"/>
    <property type="match status" value="1"/>
</dbReference>
<dbReference type="SUPFAM" id="SSF53927">
    <property type="entry name" value="Cytidine deaminase-like"/>
    <property type="match status" value="2"/>
</dbReference>
<dbReference type="PROSITE" id="PS00903">
    <property type="entry name" value="CYT_DCMP_DEAMINASES_1"/>
    <property type="match status" value="1"/>
</dbReference>
<dbReference type="PROSITE" id="PS51747">
    <property type="entry name" value="CYT_DCMP_DEAMINASES_2"/>
    <property type="match status" value="2"/>
</dbReference>
<evidence type="ECO:0000255" key="1">
    <source>
        <dbReference type="HAMAP-Rule" id="MF_01558"/>
    </source>
</evidence>
<evidence type="ECO:0000255" key="2">
    <source>
        <dbReference type="PROSITE-ProRule" id="PRU01083"/>
    </source>
</evidence>
<gene>
    <name evidence="1" type="primary">cdd</name>
    <name type="ordered locus">AHA_1894</name>
</gene>
<comment type="function">
    <text evidence="1">This enzyme scavenges exogenous and endogenous cytidine and 2'-deoxycytidine for UMP synthesis.</text>
</comment>
<comment type="catalytic activity">
    <reaction evidence="1">
        <text>cytidine + H2O + H(+) = uridine + NH4(+)</text>
        <dbReference type="Rhea" id="RHEA:16069"/>
        <dbReference type="ChEBI" id="CHEBI:15377"/>
        <dbReference type="ChEBI" id="CHEBI:15378"/>
        <dbReference type="ChEBI" id="CHEBI:16704"/>
        <dbReference type="ChEBI" id="CHEBI:17562"/>
        <dbReference type="ChEBI" id="CHEBI:28938"/>
        <dbReference type="EC" id="3.5.4.5"/>
    </reaction>
</comment>
<comment type="catalytic activity">
    <reaction evidence="1">
        <text>2'-deoxycytidine + H2O + H(+) = 2'-deoxyuridine + NH4(+)</text>
        <dbReference type="Rhea" id="RHEA:13433"/>
        <dbReference type="ChEBI" id="CHEBI:15377"/>
        <dbReference type="ChEBI" id="CHEBI:15378"/>
        <dbReference type="ChEBI" id="CHEBI:15698"/>
        <dbReference type="ChEBI" id="CHEBI:16450"/>
        <dbReference type="ChEBI" id="CHEBI:28938"/>
        <dbReference type="EC" id="3.5.4.5"/>
    </reaction>
</comment>
<comment type="cofactor">
    <cofactor evidence="1">
        <name>Zn(2+)</name>
        <dbReference type="ChEBI" id="CHEBI:29105"/>
    </cofactor>
    <text evidence="1">Binds 1 zinc ion.</text>
</comment>
<comment type="subunit">
    <text evidence="1">Homodimer.</text>
</comment>
<comment type="similarity">
    <text evidence="1">Belongs to the cytidine and deoxycytidylate deaminase family.</text>
</comment>
<reference key="1">
    <citation type="journal article" date="2006" name="J. Bacteriol.">
        <title>Genome sequence of Aeromonas hydrophila ATCC 7966T: jack of all trades.</title>
        <authorList>
            <person name="Seshadri R."/>
            <person name="Joseph S.W."/>
            <person name="Chopra A.K."/>
            <person name="Sha J."/>
            <person name="Shaw J."/>
            <person name="Graf J."/>
            <person name="Haft D.H."/>
            <person name="Wu M."/>
            <person name="Ren Q."/>
            <person name="Rosovitz M.J."/>
            <person name="Madupu R."/>
            <person name="Tallon L."/>
            <person name="Kim M."/>
            <person name="Jin S."/>
            <person name="Vuong H."/>
            <person name="Stine O.C."/>
            <person name="Ali A."/>
            <person name="Horneman A.J."/>
            <person name="Heidelberg J.F."/>
        </authorList>
    </citation>
    <scope>NUCLEOTIDE SEQUENCE [LARGE SCALE GENOMIC DNA]</scope>
    <source>
        <strain>ATCC 7966 / DSM 30187 / BCRC 13018 / CCUG 14551 / JCM 1027 / KCTC 2358 / NCIMB 9240 / NCTC 8049</strain>
    </source>
</reference>